<organism>
    <name type="scientific">Clostridium perfringens (strain 13 / Type A)</name>
    <dbReference type="NCBI Taxonomy" id="195102"/>
    <lineage>
        <taxon>Bacteria</taxon>
        <taxon>Bacillati</taxon>
        <taxon>Bacillota</taxon>
        <taxon>Clostridia</taxon>
        <taxon>Eubacteriales</taxon>
        <taxon>Clostridiaceae</taxon>
        <taxon>Clostridium</taxon>
    </lineage>
</organism>
<name>KPTA_CLOPE</name>
<evidence type="ECO:0000255" key="1">
    <source>
        <dbReference type="HAMAP-Rule" id="MF_00299"/>
    </source>
</evidence>
<protein>
    <recommendedName>
        <fullName evidence="1">Probable RNA 2'-phosphotransferase</fullName>
        <ecNumber evidence="1">2.7.1.-</ecNumber>
    </recommendedName>
</protein>
<reference key="1">
    <citation type="journal article" date="2002" name="Proc. Natl. Acad. Sci. U.S.A.">
        <title>Complete genome sequence of Clostridium perfringens, an anaerobic flesh-eater.</title>
        <authorList>
            <person name="Shimizu T."/>
            <person name="Ohtani K."/>
            <person name="Hirakawa H."/>
            <person name="Ohshima K."/>
            <person name="Yamashita A."/>
            <person name="Shiba T."/>
            <person name="Ogasawara N."/>
            <person name="Hattori M."/>
            <person name="Kuhara S."/>
            <person name="Hayashi H."/>
        </authorList>
    </citation>
    <scope>NUCLEOTIDE SEQUENCE [LARGE SCALE GENOMIC DNA]</scope>
    <source>
        <strain>13 / Type A</strain>
    </source>
</reference>
<accession>Q8XP22</accession>
<feature type="chain" id="PRO_0000157478" description="Probable RNA 2'-phosphotransferase">
    <location>
        <begin position="1"/>
        <end position="183"/>
    </location>
</feature>
<gene>
    <name evidence="1" type="primary">kptA</name>
    <name type="ordered locus">CPE0144</name>
</gene>
<keyword id="KW-0520">NAD</keyword>
<keyword id="KW-1185">Reference proteome</keyword>
<keyword id="KW-0808">Transferase</keyword>
<dbReference type="EC" id="2.7.1.-" evidence="1"/>
<dbReference type="EMBL" id="BA000016">
    <property type="protein sequence ID" value="BAB79850.1"/>
    <property type="molecule type" value="Genomic_DNA"/>
</dbReference>
<dbReference type="RefSeq" id="WP_003467695.1">
    <property type="nucleotide sequence ID" value="NC_003366.1"/>
</dbReference>
<dbReference type="SMR" id="Q8XP22"/>
<dbReference type="STRING" id="195102.gene:10489388"/>
<dbReference type="KEGG" id="cpe:CPE0144"/>
<dbReference type="HOGENOM" id="CLU_052998_4_0_9"/>
<dbReference type="Proteomes" id="UP000000818">
    <property type="component" value="Chromosome"/>
</dbReference>
<dbReference type="GO" id="GO:0003950">
    <property type="term" value="F:NAD+ poly-ADP-ribosyltransferase activity"/>
    <property type="evidence" value="ECO:0007669"/>
    <property type="project" value="InterPro"/>
</dbReference>
<dbReference type="GO" id="GO:0000215">
    <property type="term" value="F:tRNA 2'-phosphotransferase activity"/>
    <property type="evidence" value="ECO:0007669"/>
    <property type="project" value="TreeGrafter"/>
</dbReference>
<dbReference type="GO" id="GO:0006388">
    <property type="term" value="P:tRNA splicing, via endonucleolytic cleavage and ligation"/>
    <property type="evidence" value="ECO:0007669"/>
    <property type="project" value="UniProtKB-UniRule"/>
</dbReference>
<dbReference type="Gene3D" id="3.20.170.30">
    <property type="match status" value="1"/>
</dbReference>
<dbReference type="Gene3D" id="1.10.10.970">
    <property type="entry name" value="RNA 2'-phosphotransferase, Tpt1/KptA family, N-terminal domain"/>
    <property type="match status" value="1"/>
</dbReference>
<dbReference type="HAMAP" id="MF_00299">
    <property type="entry name" value="KptA"/>
    <property type="match status" value="1"/>
</dbReference>
<dbReference type="InterPro" id="IPR002745">
    <property type="entry name" value="Ptrans_KptA/Tpt1"/>
</dbReference>
<dbReference type="InterPro" id="IPR042081">
    <property type="entry name" value="RNA_2'-PTrans_C"/>
</dbReference>
<dbReference type="InterPro" id="IPR022928">
    <property type="entry name" value="RNA_2'-PTrans_KptA"/>
</dbReference>
<dbReference type="InterPro" id="IPR042080">
    <property type="entry name" value="RNA_2'-PTrans_N"/>
</dbReference>
<dbReference type="NCBIfam" id="NF002014">
    <property type="entry name" value="PRK00819.1-4"/>
    <property type="match status" value="1"/>
</dbReference>
<dbReference type="PANTHER" id="PTHR12684">
    <property type="entry name" value="PUTATIVE PHOSPHOTRANSFERASE"/>
    <property type="match status" value="1"/>
</dbReference>
<dbReference type="PANTHER" id="PTHR12684:SF2">
    <property type="entry name" value="TRNA 2'-PHOSPHOTRANSFERASE 1"/>
    <property type="match status" value="1"/>
</dbReference>
<dbReference type="Pfam" id="PF01885">
    <property type="entry name" value="PTS_2-RNA"/>
    <property type="match status" value="1"/>
</dbReference>
<dbReference type="SUPFAM" id="SSF56399">
    <property type="entry name" value="ADP-ribosylation"/>
    <property type="match status" value="1"/>
</dbReference>
<sequence length="183" mass="21074">MKNNDSKISKYISLILRHKPEEIGLKLDEHGYLGVLDLIEGLNKSYKGFSMDDLERIVREDSKGRYSFNEDKSKIRANQGHSIKVDLGLEAIKPPKVLYHGTGRKYIESILKNGLIKKERQYVHLSKDIETASIVGKRHGDLVILEVDSESMFKDGIKFYLSKNNVWLCDYVKVEYIKEISLL</sequence>
<proteinExistence type="inferred from homology"/>
<comment type="function">
    <text evidence="1">Removes the 2'-phosphate from RNA via an intermediate in which the phosphate is ADP-ribosylated by NAD followed by a presumed transesterification to release the RNA and generate ADP-ribose 1''-2''-cyclic phosphate (APPR&gt;P). May function as an ADP-ribosylase.</text>
</comment>
<comment type="similarity">
    <text evidence="1">Belongs to the KptA/TPT1 family.</text>
</comment>